<reference key="1">
    <citation type="submission" date="2005-08" db="EMBL/GenBank/DDBJ databases">
        <title>Complete sequence of chromosome 1 of Nitrosospira multiformis ATCC 25196.</title>
        <authorList>
            <person name="Copeland A."/>
            <person name="Lucas S."/>
            <person name="Lapidus A."/>
            <person name="Barry K."/>
            <person name="Detter J.C."/>
            <person name="Glavina T."/>
            <person name="Hammon N."/>
            <person name="Israni S."/>
            <person name="Pitluck S."/>
            <person name="Chain P."/>
            <person name="Malfatti S."/>
            <person name="Shin M."/>
            <person name="Vergez L."/>
            <person name="Schmutz J."/>
            <person name="Larimer F."/>
            <person name="Land M."/>
            <person name="Hauser L."/>
            <person name="Kyrpides N."/>
            <person name="Lykidis A."/>
            <person name="Richardson P."/>
        </authorList>
    </citation>
    <scope>NUCLEOTIDE SEQUENCE [LARGE SCALE GENOMIC DNA]</scope>
    <source>
        <strain>ATCC 25196 / NCIMB 11849 / C 71</strain>
    </source>
</reference>
<protein>
    <recommendedName>
        <fullName evidence="1">Thiopurine S-methyltransferase</fullName>
        <ecNumber evidence="1">2.1.1.67</ecNumber>
    </recommendedName>
    <alternativeName>
        <fullName evidence="1">Thiopurine methyltransferase</fullName>
    </alternativeName>
</protein>
<proteinExistence type="inferred from homology"/>
<keyword id="KW-0963">Cytoplasm</keyword>
<keyword id="KW-0489">Methyltransferase</keyword>
<keyword id="KW-1185">Reference proteome</keyword>
<keyword id="KW-0949">S-adenosyl-L-methionine</keyword>
<keyword id="KW-0808">Transferase</keyword>
<feature type="chain" id="PRO_1000047208" description="Thiopurine S-methyltransferase">
    <location>
        <begin position="1"/>
        <end position="220"/>
    </location>
</feature>
<feature type="binding site" evidence="1">
    <location>
        <position position="10"/>
    </location>
    <ligand>
        <name>S-adenosyl-L-methionine</name>
        <dbReference type="ChEBI" id="CHEBI:59789"/>
    </ligand>
</feature>
<feature type="binding site" evidence="1">
    <location>
        <position position="45"/>
    </location>
    <ligand>
        <name>S-adenosyl-L-methionine</name>
        <dbReference type="ChEBI" id="CHEBI:59789"/>
    </ligand>
</feature>
<feature type="binding site" evidence="1">
    <location>
        <position position="66"/>
    </location>
    <ligand>
        <name>S-adenosyl-L-methionine</name>
        <dbReference type="ChEBI" id="CHEBI:59789"/>
    </ligand>
</feature>
<feature type="binding site" evidence="1">
    <location>
        <position position="123"/>
    </location>
    <ligand>
        <name>S-adenosyl-L-methionine</name>
        <dbReference type="ChEBI" id="CHEBI:59789"/>
    </ligand>
</feature>
<sequence>MKKEYWLERWRQEEIGFHQREINPYLSRYWPELQVAPGKRVFVPLCGKSRDMIWLREQNLSVLGVELSPLAVEAFFKENGYSPRHIIGEKFDQWDADGIHLLCGDFFDLKKDHLAQVDAVYDRASLVALPPETRHAYTDHLLCILPPAIRILLITFDYPQAEMSGPPFAVSTAEVEALYGKRTDIRLLAKFDVLTENPRFQQRGISRLQESIFLLMTRTA</sequence>
<comment type="catalytic activity">
    <reaction evidence="1">
        <text>S-adenosyl-L-methionine + a thiopurine = S-adenosyl-L-homocysteine + a thiopurine S-methylether.</text>
        <dbReference type="EC" id="2.1.1.67"/>
    </reaction>
</comment>
<comment type="subcellular location">
    <subcellularLocation>
        <location evidence="1">Cytoplasm</location>
    </subcellularLocation>
</comment>
<comment type="similarity">
    <text evidence="1">Belongs to the class I-like SAM-binding methyltransferase superfamily. TPMT family.</text>
</comment>
<gene>
    <name evidence="1" type="primary">tpm</name>
    <name type="ordered locus">Nmul_A2259</name>
</gene>
<dbReference type="EC" id="2.1.1.67" evidence="1"/>
<dbReference type="EMBL" id="CP000103">
    <property type="protein sequence ID" value="ABB75551.1"/>
    <property type="molecule type" value="Genomic_DNA"/>
</dbReference>
<dbReference type="RefSeq" id="WP_011381557.1">
    <property type="nucleotide sequence ID" value="NC_007614.1"/>
</dbReference>
<dbReference type="SMR" id="Q2Y6S0"/>
<dbReference type="STRING" id="323848.Nmul_A2259"/>
<dbReference type="KEGG" id="nmu:Nmul_A2259"/>
<dbReference type="eggNOG" id="COG0500">
    <property type="taxonomic scope" value="Bacteria"/>
</dbReference>
<dbReference type="HOGENOM" id="CLU_085515_1_0_4"/>
<dbReference type="OrthoDB" id="9778208at2"/>
<dbReference type="Proteomes" id="UP000002718">
    <property type="component" value="Chromosome"/>
</dbReference>
<dbReference type="GO" id="GO:0005737">
    <property type="term" value="C:cytoplasm"/>
    <property type="evidence" value="ECO:0007669"/>
    <property type="project" value="UniProtKB-SubCell"/>
</dbReference>
<dbReference type="GO" id="GO:0008119">
    <property type="term" value="F:thiopurine S-methyltransferase activity"/>
    <property type="evidence" value="ECO:0007669"/>
    <property type="project" value="UniProtKB-UniRule"/>
</dbReference>
<dbReference type="GO" id="GO:0032259">
    <property type="term" value="P:methylation"/>
    <property type="evidence" value="ECO:0007669"/>
    <property type="project" value="UniProtKB-KW"/>
</dbReference>
<dbReference type="GO" id="GO:0010038">
    <property type="term" value="P:response to metal ion"/>
    <property type="evidence" value="ECO:0007669"/>
    <property type="project" value="InterPro"/>
</dbReference>
<dbReference type="FunFam" id="3.40.50.150:FF:000101">
    <property type="entry name" value="Thiopurine S-methyltransferase"/>
    <property type="match status" value="1"/>
</dbReference>
<dbReference type="Gene3D" id="3.40.50.150">
    <property type="entry name" value="Vaccinia Virus protein VP39"/>
    <property type="match status" value="1"/>
</dbReference>
<dbReference type="HAMAP" id="MF_00812">
    <property type="entry name" value="Thiopur_methtran"/>
    <property type="match status" value="1"/>
</dbReference>
<dbReference type="InterPro" id="IPR029063">
    <property type="entry name" value="SAM-dependent_MTases_sf"/>
</dbReference>
<dbReference type="InterPro" id="IPR022474">
    <property type="entry name" value="Thiopur_S-MeTfrase_Se/Te_detox"/>
</dbReference>
<dbReference type="InterPro" id="IPR025835">
    <property type="entry name" value="Thiopurine_S-MeTrfase"/>
</dbReference>
<dbReference type="InterPro" id="IPR008854">
    <property type="entry name" value="TPMT"/>
</dbReference>
<dbReference type="NCBIfam" id="NF009732">
    <property type="entry name" value="PRK13255.1"/>
    <property type="match status" value="1"/>
</dbReference>
<dbReference type="NCBIfam" id="TIGR03840">
    <property type="entry name" value="TMPT_Se_Te"/>
    <property type="match status" value="1"/>
</dbReference>
<dbReference type="PANTHER" id="PTHR10259">
    <property type="entry name" value="THIOPURINE S-METHYLTRANSFERASE"/>
    <property type="match status" value="1"/>
</dbReference>
<dbReference type="PANTHER" id="PTHR10259:SF11">
    <property type="entry name" value="THIOPURINE S-METHYLTRANSFERASE"/>
    <property type="match status" value="1"/>
</dbReference>
<dbReference type="Pfam" id="PF05724">
    <property type="entry name" value="TPMT"/>
    <property type="match status" value="1"/>
</dbReference>
<dbReference type="PIRSF" id="PIRSF023956">
    <property type="entry name" value="Thiopurine_S-methyltransferase"/>
    <property type="match status" value="1"/>
</dbReference>
<dbReference type="SUPFAM" id="SSF53335">
    <property type="entry name" value="S-adenosyl-L-methionine-dependent methyltransferases"/>
    <property type="match status" value="1"/>
</dbReference>
<dbReference type="PROSITE" id="PS51585">
    <property type="entry name" value="SAM_MT_TPMT"/>
    <property type="match status" value="1"/>
</dbReference>
<accession>Q2Y6S0</accession>
<evidence type="ECO:0000255" key="1">
    <source>
        <dbReference type="HAMAP-Rule" id="MF_00812"/>
    </source>
</evidence>
<name>TPMT_NITMU</name>
<organism>
    <name type="scientific">Nitrosospira multiformis (strain ATCC 25196 / NCIMB 11849 / C 71)</name>
    <dbReference type="NCBI Taxonomy" id="323848"/>
    <lineage>
        <taxon>Bacteria</taxon>
        <taxon>Pseudomonadati</taxon>
        <taxon>Pseudomonadota</taxon>
        <taxon>Betaproteobacteria</taxon>
        <taxon>Nitrosomonadales</taxon>
        <taxon>Nitrosomonadaceae</taxon>
        <taxon>Nitrosospira</taxon>
    </lineage>
</organism>